<organism>
    <name type="scientific">Burkholderia pseudomallei (strain 1106a)</name>
    <dbReference type="NCBI Taxonomy" id="357348"/>
    <lineage>
        <taxon>Bacteria</taxon>
        <taxon>Pseudomonadati</taxon>
        <taxon>Pseudomonadota</taxon>
        <taxon>Betaproteobacteria</taxon>
        <taxon>Burkholderiales</taxon>
        <taxon>Burkholderiaceae</taxon>
        <taxon>Burkholderia</taxon>
        <taxon>pseudomallei group</taxon>
    </lineage>
</organism>
<proteinExistence type="inferred from homology"/>
<evidence type="ECO:0000255" key="1">
    <source>
        <dbReference type="HAMAP-Rule" id="MF_00535"/>
    </source>
</evidence>
<protein>
    <recommendedName>
        <fullName evidence="1">Cyanate hydratase</fullName>
        <shortName evidence="1">Cyanase</shortName>
        <ecNumber evidence="1">4.2.1.104</ecNumber>
    </recommendedName>
    <alternativeName>
        <fullName evidence="1">Cyanate hydrolase</fullName>
    </alternativeName>
    <alternativeName>
        <fullName evidence="1">Cyanate lyase</fullName>
    </alternativeName>
</protein>
<reference key="1">
    <citation type="journal article" date="2010" name="Genome Biol. Evol.">
        <title>Continuing evolution of Burkholderia mallei through genome reduction and large-scale rearrangements.</title>
        <authorList>
            <person name="Losada L."/>
            <person name="Ronning C.M."/>
            <person name="DeShazer D."/>
            <person name="Woods D."/>
            <person name="Fedorova N."/>
            <person name="Kim H.S."/>
            <person name="Shabalina S.A."/>
            <person name="Pearson T.R."/>
            <person name="Brinkac L."/>
            <person name="Tan P."/>
            <person name="Nandi T."/>
            <person name="Crabtree J."/>
            <person name="Badger J."/>
            <person name="Beckstrom-Sternberg S."/>
            <person name="Saqib M."/>
            <person name="Schutzer S.E."/>
            <person name="Keim P."/>
            <person name="Nierman W.C."/>
        </authorList>
    </citation>
    <scope>NUCLEOTIDE SEQUENCE [LARGE SCALE GENOMIC DNA]</scope>
    <source>
        <strain>1106a</strain>
    </source>
</reference>
<keyword id="KW-0456">Lyase</keyword>
<sequence length="156" mass="16932">MTQSQHSQSAREALAERIVEAKTRKNLTFEQINEGTGLSVAFTTAALLGQHPLPADAARVVAAKLDLDDDAQRLLQTIPVRGSIPGGVPTDPTIYRFYEIVQVYGSTLKALIHEQFGDGIVSAINFKLDIKKVDDPEGGSRAVITLDGKYLPTKPF</sequence>
<dbReference type="EC" id="4.2.1.104" evidence="1"/>
<dbReference type="EMBL" id="CP000572">
    <property type="protein sequence ID" value="ABN91752.1"/>
    <property type="molecule type" value="Genomic_DNA"/>
</dbReference>
<dbReference type="RefSeq" id="WP_004522069.1">
    <property type="nucleotide sequence ID" value="NC_009076.1"/>
</dbReference>
<dbReference type="SMR" id="A3NZD0"/>
<dbReference type="KEGG" id="bpl:BURPS1106A_3464"/>
<dbReference type="HOGENOM" id="CLU_103452_1_1_4"/>
<dbReference type="Proteomes" id="UP000006738">
    <property type="component" value="Chromosome I"/>
</dbReference>
<dbReference type="GO" id="GO:0008824">
    <property type="term" value="F:cyanate hydratase activity"/>
    <property type="evidence" value="ECO:0007669"/>
    <property type="project" value="UniProtKB-UniRule"/>
</dbReference>
<dbReference type="GO" id="GO:0003677">
    <property type="term" value="F:DNA binding"/>
    <property type="evidence" value="ECO:0007669"/>
    <property type="project" value="InterPro"/>
</dbReference>
<dbReference type="GO" id="GO:0009439">
    <property type="term" value="P:cyanate metabolic process"/>
    <property type="evidence" value="ECO:0007669"/>
    <property type="project" value="UniProtKB-UniRule"/>
</dbReference>
<dbReference type="CDD" id="cd00559">
    <property type="entry name" value="Cyanase_C"/>
    <property type="match status" value="1"/>
</dbReference>
<dbReference type="Gene3D" id="3.30.1160.10">
    <property type="entry name" value="Cyanate lyase, C-terminal domain"/>
    <property type="match status" value="1"/>
</dbReference>
<dbReference type="Gene3D" id="1.10.260.40">
    <property type="entry name" value="lambda repressor-like DNA-binding domains"/>
    <property type="match status" value="1"/>
</dbReference>
<dbReference type="HAMAP" id="MF_00535">
    <property type="entry name" value="Cyanate_hydrat"/>
    <property type="match status" value="1"/>
</dbReference>
<dbReference type="InterPro" id="IPR008076">
    <property type="entry name" value="Cyanase"/>
</dbReference>
<dbReference type="InterPro" id="IPR003712">
    <property type="entry name" value="Cyanate_lyase_C"/>
</dbReference>
<dbReference type="InterPro" id="IPR036581">
    <property type="entry name" value="Cyanate_lyase_C_sf"/>
</dbReference>
<dbReference type="InterPro" id="IPR048564">
    <property type="entry name" value="CYNS_N"/>
</dbReference>
<dbReference type="InterPro" id="IPR010982">
    <property type="entry name" value="Lambda_DNA-bd_dom_sf"/>
</dbReference>
<dbReference type="NCBIfam" id="TIGR00673">
    <property type="entry name" value="cynS"/>
    <property type="match status" value="1"/>
</dbReference>
<dbReference type="NCBIfam" id="NF002773">
    <property type="entry name" value="PRK02866.1"/>
    <property type="match status" value="1"/>
</dbReference>
<dbReference type="PANTHER" id="PTHR34186">
    <property type="entry name" value="CYANATE HYDRATASE"/>
    <property type="match status" value="1"/>
</dbReference>
<dbReference type="PANTHER" id="PTHR34186:SF2">
    <property type="entry name" value="CYANATE HYDRATASE"/>
    <property type="match status" value="1"/>
</dbReference>
<dbReference type="Pfam" id="PF02560">
    <property type="entry name" value="Cyanate_lyase"/>
    <property type="match status" value="1"/>
</dbReference>
<dbReference type="Pfam" id="PF21291">
    <property type="entry name" value="CYNS_N"/>
    <property type="match status" value="1"/>
</dbReference>
<dbReference type="PIRSF" id="PIRSF001263">
    <property type="entry name" value="Cyanate_hydratas"/>
    <property type="match status" value="1"/>
</dbReference>
<dbReference type="PRINTS" id="PR01693">
    <property type="entry name" value="CYANASE"/>
</dbReference>
<dbReference type="SMART" id="SM01116">
    <property type="entry name" value="Cyanate_lyase"/>
    <property type="match status" value="1"/>
</dbReference>
<dbReference type="SUPFAM" id="SSF55234">
    <property type="entry name" value="Cyanase C-terminal domain"/>
    <property type="match status" value="1"/>
</dbReference>
<dbReference type="SUPFAM" id="SSF47413">
    <property type="entry name" value="lambda repressor-like DNA-binding domains"/>
    <property type="match status" value="1"/>
</dbReference>
<name>CYNS_BURP0</name>
<comment type="function">
    <text evidence="1">Catalyzes the reaction of cyanate with bicarbonate to produce ammonia and carbon dioxide.</text>
</comment>
<comment type="catalytic activity">
    <reaction evidence="1">
        <text>cyanate + hydrogencarbonate + 3 H(+) = NH4(+) + 2 CO2</text>
        <dbReference type="Rhea" id="RHEA:11120"/>
        <dbReference type="ChEBI" id="CHEBI:15378"/>
        <dbReference type="ChEBI" id="CHEBI:16526"/>
        <dbReference type="ChEBI" id="CHEBI:17544"/>
        <dbReference type="ChEBI" id="CHEBI:28938"/>
        <dbReference type="ChEBI" id="CHEBI:29195"/>
        <dbReference type="EC" id="4.2.1.104"/>
    </reaction>
</comment>
<comment type="similarity">
    <text evidence="1">Belongs to the cyanase family.</text>
</comment>
<feature type="chain" id="PRO_1000051471" description="Cyanate hydratase">
    <location>
        <begin position="1"/>
        <end position="156"/>
    </location>
</feature>
<feature type="active site" evidence="1">
    <location>
        <position position="96"/>
    </location>
</feature>
<feature type="active site" evidence="1">
    <location>
        <position position="99"/>
    </location>
</feature>
<feature type="active site" evidence="1">
    <location>
        <position position="122"/>
    </location>
</feature>
<accession>A3NZD0</accession>
<gene>
    <name evidence="1" type="primary">cynS</name>
    <name type="ordered locus">BURPS1106A_3464</name>
</gene>